<protein>
    <recommendedName>
        <fullName evidence="1">Diaminopimelate epimerase</fullName>
        <shortName evidence="1">DAP epimerase</shortName>
        <ecNumber evidence="1">5.1.1.7</ecNumber>
    </recommendedName>
    <alternativeName>
        <fullName evidence="1">PLP-independent amino acid racemase</fullName>
    </alternativeName>
</protein>
<dbReference type="EC" id="5.1.1.7" evidence="1"/>
<dbReference type="EMBL" id="CP000911">
    <property type="protein sequence ID" value="ABY38789.1"/>
    <property type="molecule type" value="Genomic_DNA"/>
</dbReference>
<dbReference type="RefSeq" id="WP_002966997.1">
    <property type="nucleotide sequence ID" value="NC_010169.1"/>
</dbReference>
<dbReference type="SMR" id="B0CIT6"/>
<dbReference type="GeneID" id="93017739"/>
<dbReference type="KEGG" id="bmt:BSUIS_A1772"/>
<dbReference type="HOGENOM" id="CLU_053306_1_0_5"/>
<dbReference type="UniPathway" id="UPA00034">
    <property type="reaction ID" value="UER00025"/>
</dbReference>
<dbReference type="Proteomes" id="UP000008545">
    <property type="component" value="Chromosome I"/>
</dbReference>
<dbReference type="GO" id="GO:0005829">
    <property type="term" value="C:cytosol"/>
    <property type="evidence" value="ECO:0007669"/>
    <property type="project" value="TreeGrafter"/>
</dbReference>
<dbReference type="GO" id="GO:0008837">
    <property type="term" value="F:diaminopimelate epimerase activity"/>
    <property type="evidence" value="ECO:0007669"/>
    <property type="project" value="UniProtKB-UniRule"/>
</dbReference>
<dbReference type="GO" id="GO:0009089">
    <property type="term" value="P:lysine biosynthetic process via diaminopimelate"/>
    <property type="evidence" value="ECO:0007669"/>
    <property type="project" value="UniProtKB-UniRule"/>
</dbReference>
<dbReference type="Gene3D" id="3.10.310.10">
    <property type="entry name" value="Diaminopimelate Epimerase, Chain A, domain 1"/>
    <property type="match status" value="2"/>
</dbReference>
<dbReference type="HAMAP" id="MF_00197">
    <property type="entry name" value="DAP_epimerase"/>
    <property type="match status" value="1"/>
</dbReference>
<dbReference type="InterPro" id="IPR018510">
    <property type="entry name" value="DAP_epimerase_AS"/>
</dbReference>
<dbReference type="InterPro" id="IPR001653">
    <property type="entry name" value="DAP_epimerase_DapF"/>
</dbReference>
<dbReference type="NCBIfam" id="TIGR00652">
    <property type="entry name" value="DapF"/>
    <property type="match status" value="1"/>
</dbReference>
<dbReference type="PANTHER" id="PTHR31689:SF0">
    <property type="entry name" value="DIAMINOPIMELATE EPIMERASE"/>
    <property type="match status" value="1"/>
</dbReference>
<dbReference type="PANTHER" id="PTHR31689">
    <property type="entry name" value="DIAMINOPIMELATE EPIMERASE, CHLOROPLASTIC"/>
    <property type="match status" value="1"/>
</dbReference>
<dbReference type="Pfam" id="PF01678">
    <property type="entry name" value="DAP_epimerase"/>
    <property type="match status" value="2"/>
</dbReference>
<dbReference type="SUPFAM" id="SSF54506">
    <property type="entry name" value="Diaminopimelate epimerase-like"/>
    <property type="match status" value="2"/>
</dbReference>
<dbReference type="PROSITE" id="PS01326">
    <property type="entry name" value="DAP_EPIMERASE"/>
    <property type="match status" value="1"/>
</dbReference>
<organism>
    <name type="scientific">Brucella suis (strain ATCC 23445 / NCTC 10510)</name>
    <dbReference type="NCBI Taxonomy" id="470137"/>
    <lineage>
        <taxon>Bacteria</taxon>
        <taxon>Pseudomonadati</taxon>
        <taxon>Pseudomonadota</taxon>
        <taxon>Alphaproteobacteria</taxon>
        <taxon>Hyphomicrobiales</taxon>
        <taxon>Brucellaceae</taxon>
        <taxon>Brucella/Ochrobactrum group</taxon>
        <taxon>Brucella</taxon>
    </lineage>
</organism>
<keyword id="KW-0028">Amino-acid biosynthesis</keyword>
<keyword id="KW-0963">Cytoplasm</keyword>
<keyword id="KW-0413">Isomerase</keyword>
<keyword id="KW-0457">Lysine biosynthesis</keyword>
<comment type="function">
    <text evidence="1">Catalyzes the stereoinversion of LL-2,6-diaminopimelate (L,L-DAP) to meso-diaminopimelate (meso-DAP), a precursor of L-lysine and an essential component of the bacterial peptidoglycan.</text>
</comment>
<comment type="catalytic activity">
    <reaction evidence="1">
        <text>(2S,6S)-2,6-diaminopimelate = meso-2,6-diaminopimelate</text>
        <dbReference type="Rhea" id="RHEA:15393"/>
        <dbReference type="ChEBI" id="CHEBI:57609"/>
        <dbReference type="ChEBI" id="CHEBI:57791"/>
        <dbReference type="EC" id="5.1.1.7"/>
    </reaction>
</comment>
<comment type="pathway">
    <text evidence="1">Amino-acid biosynthesis; L-lysine biosynthesis via DAP pathway; DL-2,6-diaminopimelate from LL-2,6-diaminopimelate: step 1/1.</text>
</comment>
<comment type="subunit">
    <text evidence="1">Homodimer.</text>
</comment>
<comment type="subcellular location">
    <subcellularLocation>
        <location evidence="1">Cytoplasm</location>
    </subcellularLocation>
</comment>
<comment type="similarity">
    <text evidence="1">Belongs to the diaminopimelate epimerase family.</text>
</comment>
<name>DAPF_BRUSI</name>
<reference key="1">
    <citation type="submission" date="2007-12" db="EMBL/GenBank/DDBJ databases">
        <title>Brucella suis ATCC 23445 whole genome shotgun sequencing project.</title>
        <authorList>
            <person name="Setubal J.C."/>
            <person name="Bowns C."/>
            <person name="Boyle S."/>
            <person name="Crasta O.R."/>
            <person name="Czar M.J."/>
            <person name="Dharmanolla C."/>
            <person name="Gillespie J.J."/>
            <person name="Kenyon R.W."/>
            <person name="Lu J."/>
            <person name="Mane S."/>
            <person name="Mohapatra S."/>
            <person name="Nagrani S."/>
            <person name="Purkayastha A."/>
            <person name="Rajasimha H.K."/>
            <person name="Shallom J.M."/>
            <person name="Shallom S."/>
            <person name="Shukla M."/>
            <person name="Snyder E.E."/>
            <person name="Sobral B.W."/>
            <person name="Wattam A.R."/>
            <person name="Will R."/>
            <person name="Williams K."/>
            <person name="Yoo H."/>
            <person name="Bruce D."/>
            <person name="Detter C."/>
            <person name="Munk C."/>
            <person name="Brettin T.S."/>
        </authorList>
    </citation>
    <scope>NUCLEOTIDE SEQUENCE [LARGE SCALE GENOMIC DNA]</scope>
    <source>
        <strain>ATCC 23445 / NCTC 10510</strain>
    </source>
</reference>
<evidence type="ECO:0000255" key="1">
    <source>
        <dbReference type="HAMAP-Rule" id="MF_00197"/>
    </source>
</evidence>
<evidence type="ECO:0000256" key="2">
    <source>
        <dbReference type="SAM" id="MobiDB-lite"/>
    </source>
</evidence>
<gene>
    <name evidence="1" type="primary">dapF</name>
    <name type="ordered locus">BSUIS_A1772</name>
</gene>
<feature type="chain" id="PRO_1000077692" description="Diaminopimelate epimerase">
    <location>
        <begin position="1"/>
        <end position="303"/>
    </location>
</feature>
<feature type="region of interest" description="Disordered" evidence="2">
    <location>
        <begin position="278"/>
        <end position="303"/>
    </location>
</feature>
<feature type="active site" description="Proton donor" evidence="1">
    <location>
        <position position="76"/>
    </location>
</feature>
<feature type="active site" description="Proton acceptor" evidence="1">
    <location>
        <position position="224"/>
    </location>
</feature>
<feature type="binding site" evidence="1">
    <location>
        <position position="15"/>
    </location>
    <ligand>
        <name>substrate</name>
    </ligand>
</feature>
<feature type="binding site" evidence="1">
    <location>
        <position position="47"/>
    </location>
    <ligand>
        <name>substrate</name>
    </ligand>
</feature>
<feature type="binding site" evidence="1">
    <location>
        <position position="67"/>
    </location>
    <ligand>
        <name>substrate</name>
    </ligand>
</feature>
<feature type="binding site" evidence="1">
    <location>
        <begin position="77"/>
        <end position="78"/>
    </location>
    <ligand>
        <name>substrate</name>
    </ligand>
</feature>
<feature type="binding site" evidence="1">
    <location>
        <position position="163"/>
    </location>
    <ligand>
        <name>substrate</name>
    </ligand>
</feature>
<feature type="binding site" evidence="1">
    <location>
        <position position="197"/>
    </location>
    <ligand>
        <name>substrate</name>
    </ligand>
</feature>
<feature type="binding site" evidence="1">
    <location>
        <begin position="215"/>
        <end position="216"/>
    </location>
    <ligand>
        <name>substrate</name>
    </ligand>
</feature>
<feature type="binding site" evidence="1">
    <location>
        <begin position="225"/>
        <end position="226"/>
    </location>
    <ligand>
        <name>substrate</name>
    </ligand>
</feature>
<feature type="site" description="Could be important to modulate the pK values of the two catalytic cysteine residues" evidence="1">
    <location>
        <position position="165"/>
    </location>
</feature>
<feature type="site" description="Could be important to modulate the pK values of the two catalytic cysteine residues" evidence="1">
    <location>
        <position position="215"/>
    </location>
</feature>
<accession>B0CIT6</accession>
<proteinExistence type="inferred from homology"/>
<sequence>MATKAAFARMNGLGNQIIVADMRGRADSITSAAAIRLASDSETAFDQIMAIHDPRTPGTDYYIAIINCDGTQAQACGNGTRCVVQALAAETGRHAFTFETRAGILTATEHDDGLISVDMGTPRFDWQDIPLAQAVADTRKIELQVGPADAPVLHSPSIASMGNPHAVFWVDKDVWSYELDKFGPLLENHPIFPERANISIAHVTSSDTIDLRTWERGAGLTRACGSAACAAAVSAARTGRTGRKVTVNVPGGPLLIEWRDDDHVMMTGPAEWEFSGTFDPATGEWSRDTQGLQGSGNADRGAA</sequence>